<evidence type="ECO:0000255" key="1"/>
<evidence type="ECO:0000269" key="2">
    <source>
    </source>
</evidence>
<evidence type="ECO:0000269" key="3">
    <source>
    </source>
</evidence>
<evidence type="ECO:0000303" key="4">
    <source>
    </source>
</evidence>
<evidence type="ECO:0000303" key="5">
    <source>
    </source>
</evidence>
<evidence type="ECO:0000305" key="6"/>
<evidence type="ECO:0000305" key="7">
    <source>
    </source>
</evidence>
<evidence type="ECO:0000305" key="8">
    <source>
    </source>
</evidence>
<evidence type="ECO:0000312" key="9">
    <source>
        <dbReference type="EMBL" id="AHK22716.1"/>
    </source>
</evidence>
<organism>
    <name type="scientific">Tetramorium bicarinatum</name>
    <name type="common">Tramp ant</name>
    <dbReference type="NCBI Taxonomy" id="219812"/>
    <lineage>
        <taxon>Eukaryota</taxon>
        <taxon>Metazoa</taxon>
        <taxon>Ecdysozoa</taxon>
        <taxon>Arthropoda</taxon>
        <taxon>Hexapoda</taxon>
        <taxon>Insecta</taxon>
        <taxon>Pterygota</taxon>
        <taxon>Neoptera</taxon>
        <taxon>Endopterygota</taxon>
        <taxon>Hymenoptera</taxon>
        <taxon>Apocrita</taxon>
        <taxon>Aculeata</taxon>
        <taxon>Formicoidea</taxon>
        <taxon>Formicidae</taxon>
        <taxon>Myrmicinae</taxon>
        <taxon>Tetramorium</taxon>
    </lineage>
</organism>
<name>B11A_TETBN</name>
<feature type="signal peptide" evidence="1">
    <location>
        <begin position="1"/>
        <end position="26"/>
    </location>
</feature>
<feature type="propeptide" id="PRO_0000447049" evidence="7">
    <location>
        <begin position="27"/>
        <end position="56"/>
    </location>
</feature>
<feature type="peptide" id="PRO_5004909437" description="M-myrmicitoxin(01)-Tb1a" evidence="2">
    <location>
        <begin position="57"/>
        <end position="76"/>
    </location>
</feature>
<feature type="modified residue" description="Valine amide" evidence="2">
    <location>
        <position position="76"/>
    </location>
</feature>
<protein>
    <recommendedName>
        <fullName evidence="6">M-myrmicitoxin(01)-Tb1a</fullName>
        <shortName evidence="6">M-MYRTX(01)-Tb1a</shortName>
    </recommendedName>
    <alternativeName>
        <fullName evidence="4">Ant peptide P16</fullName>
    </alternativeName>
    <alternativeName>
        <fullName evidence="4">Bicarinalin</fullName>
    </alternativeName>
    <alternativeName>
        <fullName evidence="9">Bicarinaline</fullName>
    </alternativeName>
    <alternativeName>
        <fullName evidence="5">M-myrmicitoxin-Tb1a</fullName>
        <shortName evidence="5">M-MYRTX-Tb1a</shortName>
    </alternativeName>
</protein>
<proteinExistence type="evidence at protein level"/>
<reference key="1">
    <citation type="journal article" date="2016" name="Peptides">
        <title>Biochemical and biophysical combined study of bicarinalin, an ant venom antimicrobial peptide.</title>
        <authorList>
            <person name="Tene N."/>
            <person name="Bonnafe E."/>
            <person name="Berger F."/>
            <person name="Rifflet A."/>
            <person name="Guilhaudis L."/>
            <person name="Segalas-Milazzo I."/>
            <person name="Pipy B."/>
            <person name="Coste A."/>
            <person name="Leprince J."/>
            <person name="Treilhou M."/>
        </authorList>
    </citation>
    <scope>NUCLEOTIDE SEQUENCE [MRNA]</scope>
    <scope>FUNCTION</scope>
    <scope>SYNTHESIS OF 57-66</scope>
    <scope>3D-STRUCTURE MODELING</scope>
    <source>
        <tissue>Venom gland</tissue>
    </source>
</reference>
<reference key="2">
    <citation type="journal article" date="2013" name="Toxicon">
        <title>Profiling the venom gland transcriptome of Tetramorium bicarinatum (Hymenoptera: Formicidae): the first transcriptome analysis of an ant species.</title>
        <authorList>
            <person name="Bouzid W."/>
            <person name="Klopp C."/>
            <person name="Verdenaud M."/>
            <person name="Ducancel F."/>
            <person name="Vetillard A."/>
        </authorList>
    </citation>
    <scope>NUCLEOTIDE SEQUENCE [MRNA]</scope>
    <source>
        <tissue>Venom gland</tissue>
    </source>
</reference>
<reference key="3">
    <citation type="journal article" date="2012" name="Peptides">
        <title>Identification and characterization of a novel antimicrobial peptide from the venom of the ant Tetramorium bicarinatum.</title>
        <authorList>
            <person name="Rifflet A."/>
            <person name="Gavalda S."/>
            <person name="Tene N."/>
            <person name="Orivel J."/>
            <person name="Leprince J."/>
            <person name="Guilhaudis L."/>
            <person name="Genin E."/>
            <person name="Vetillard A."/>
            <person name="Treilhou M."/>
        </authorList>
    </citation>
    <scope>PROTEIN SEQUENCE OF 57-76</scope>
    <scope>SYNTHESIS OF 57-76</scope>
    <scope>FUNCTION</scope>
    <scope>MASS SPECTROMETRY</scope>
    <scope>AMIDATION AT VAL-76</scope>
    <scope>SUBCELLULAR LOCATION</scope>
    <scope>CIRCULAR DICHROISM</scope>
    <source>
        <tissue>Venom</tissue>
    </source>
</reference>
<reference key="4">
    <citation type="journal article" date="2017" name="Toxins">
        <title>Anti-helicobacter pylori properties of the ant-venom peptide bicarinalin.</title>
        <authorList>
            <person name="Guzman J."/>
            <person name="Tene N."/>
            <person name="Touchard A."/>
            <person name="Castillo D."/>
            <person name="Belkhelfa H."/>
            <person name="Haddioui-Hbabi L."/>
            <person name="Treilhou M."/>
            <person name="Sauvain M."/>
        </authorList>
    </citation>
    <scope>FUNCTION</scope>
    <scope>SYNTHESIS OF 57-76</scope>
</reference>
<reference key="5">
    <citation type="journal article" date="2016" name="Toxins">
        <title>The biochemical toxin arsenal from ant venoms.</title>
        <authorList>
            <person name="Touchard A."/>
            <person name="Aili S.R."/>
            <person name="Fox E.G."/>
            <person name="Escoubas P."/>
            <person name="Orivel J."/>
            <person name="Nicholson G.M."/>
            <person name="Dejean A."/>
        </authorList>
    </citation>
    <scope>REVIEW</scope>
    <scope>NOMENCLATURE</scope>
</reference>
<sequence>MKLSFLSLVLAIILVMALMYTPHAEAKAWADADADATAAADADADAVADALADAVAKIKIPWGKVKDFLVGGMKAVGKK</sequence>
<comment type="function">
    <text evidence="2 3">Antimicrobial peptide that shows antimicrobial activities against all microorganisms tested with minimal inhibitory concentrations (MICs) values ranging from 0.45 to 97.5 umol/L (PubMed:27058430). This peptide kills the microorganisms by permeabilizating the membranes (PubMed:27058430). It shows a very weak hemolytic activity (HC(50)=325 umol/L) and weak cytotoxicity against human lymphocytes (LC(50)=67.8 umol/L) (PubMed:22960382, PubMed:27058430). Gram-negative bacteria tested are E.coli (MIC=24.4 umol/L), C.sakazakii (MIC=5.8 umol/L), P.aeruginosa (MIC=8.7-12.2 umol/L), S.enterica (MIC=5.4 umol/L), and H.pylori (MIC=0.99-3.9 umol/L) (PubMed:22960382, PubMed:29286296). Gram-positive bacteria tested are E.hirae (MIC=12.2 umol/L), S.aureus (MIC=3.0-6.4 umol/L), methicillin-resistant S.aureus (MRSA) (MIC=8.7 umol/L), S.xylosus (MIC=0.45-1.3 umol/L), and B.subtilis (MIC=24.4 umol/L) (PubMed:22960382, PubMed:27058430). Fungi tested are A.niger (MIC=0.75 umol/L), C.albicans (MIC=17.3 umol/L), G.candidum (MIC=97.5 umol/L), and S.cerevisiae (MIC=6.1 umol/L) (PubMed:27058430). Finally the parasite tested is L.infantum (MIC=1.5 umol/L) (PubMed:27058430).</text>
</comment>
<comment type="subcellular location">
    <subcellularLocation>
        <location evidence="2">Secreted</location>
    </subcellularLocation>
    <subcellularLocation>
        <location evidence="8">Target cell membrane</location>
    </subcellularLocation>
    <text evidence="7">Forms a helical membrane channel in the prey.</text>
</comment>
<comment type="tissue specificity">
    <text evidence="7">Expressed by the venom gland.</text>
</comment>
<comment type="PTM">
    <text evidence="2">The C-terminal amidation is important for antimicrobial activity, since a non-amidated synthetic peptide shows a reduced antimicrobial activity (2-20-fold depending on the strain tested). The amidation may play a positive role in the peptide conformation, since amidated peptide shows an increase of about 5% of helical content.</text>
</comment>
<comment type="mass spectrometry"/>
<comment type="miscellaneous">
    <text evidence="8">This is the most abundant peptide from the venom of T.bicarinatum.</text>
</comment>
<comment type="similarity">
    <text evidence="6">Belongs to the formicidae venom precursor-01 superfamily.</text>
</comment>
<accession>W8GNV3</accession>
<keyword id="KW-0027">Amidation</keyword>
<keyword id="KW-0044">Antibiotic</keyword>
<keyword id="KW-0929">Antimicrobial</keyword>
<keyword id="KW-0903">Direct protein sequencing</keyword>
<keyword id="KW-0472">Membrane</keyword>
<keyword id="KW-0964">Secreted</keyword>
<keyword id="KW-0732">Signal</keyword>
<keyword id="KW-1052">Target cell membrane</keyword>
<keyword id="KW-1053">Target membrane</keyword>
<dbReference type="EMBL" id="KF929552">
    <property type="protein sequence ID" value="AHK22716.1"/>
    <property type="molecule type" value="mRNA"/>
</dbReference>
<dbReference type="EMBL" id="JZ168535">
    <property type="status" value="NOT_ANNOTATED_CDS"/>
    <property type="molecule type" value="mRNA"/>
</dbReference>
<dbReference type="GO" id="GO:0005576">
    <property type="term" value="C:extracellular region"/>
    <property type="evidence" value="ECO:0007669"/>
    <property type="project" value="UniProtKB-SubCell"/>
</dbReference>
<dbReference type="GO" id="GO:0016020">
    <property type="term" value="C:membrane"/>
    <property type="evidence" value="ECO:0007669"/>
    <property type="project" value="UniProtKB-KW"/>
</dbReference>
<dbReference type="GO" id="GO:0044218">
    <property type="term" value="C:other organism cell membrane"/>
    <property type="evidence" value="ECO:0007669"/>
    <property type="project" value="UniProtKB-KW"/>
</dbReference>
<dbReference type="GO" id="GO:0042742">
    <property type="term" value="P:defense response to bacterium"/>
    <property type="evidence" value="ECO:0007669"/>
    <property type="project" value="UniProtKB-KW"/>
</dbReference>
<dbReference type="InterPro" id="IPR049518">
    <property type="entry name" value="Pilosulin"/>
</dbReference>
<dbReference type="Pfam" id="PF17499">
    <property type="entry name" value="Pilosulin"/>
    <property type="match status" value="1"/>
</dbReference>